<evidence type="ECO:0000255" key="1">
    <source>
        <dbReference type="PROSITE-ProRule" id="PRU00981"/>
    </source>
</evidence>
<evidence type="ECO:0000256" key="2">
    <source>
        <dbReference type="SAM" id="MobiDB-lite"/>
    </source>
</evidence>
<evidence type="ECO:0000269" key="3">
    <source>
    </source>
</evidence>
<evidence type="ECO:0000303" key="4">
    <source>
    </source>
</evidence>
<evidence type="ECO:0000303" key="5">
    <source>
    </source>
</evidence>
<evidence type="ECO:0000303" key="6">
    <source>
    </source>
</evidence>
<evidence type="ECO:0000303" key="7">
    <source ref="6"/>
</evidence>
<evidence type="ECO:0000305" key="8"/>
<name>BH027_ARATH</name>
<keyword id="KW-0025">Alternative splicing</keyword>
<keyword id="KW-0238">DNA-binding</keyword>
<keyword id="KW-0539">Nucleus</keyword>
<keyword id="KW-1185">Reference proteome</keyword>
<keyword id="KW-0804">Transcription</keyword>
<keyword id="KW-0805">Transcription regulation</keyword>
<reference key="1">
    <citation type="journal article" date="1999" name="Nature">
        <title>Sequence and analysis of chromosome 4 of the plant Arabidopsis thaliana.</title>
        <authorList>
            <person name="Mayer K.F.X."/>
            <person name="Schueller C."/>
            <person name="Wambutt R."/>
            <person name="Murphy G."/>
            <person name="Volckaert G."/>
            <person name="Pohl T."/>
            <person name="Duesterhoeft A."/>
            <person name="Stiekema W."/>
            <person name="Entian K.-D."/>
            <person name="Terryn N."/>
            <person name="Harris B."/>
            <person name="Ansorge W."/>
            <person name="Brandt P."/>
            <person name="Grivell L.A."/>
            <person name="Rieger M."/>
            <person name="Weichselgartner M."/>
            <person name="de Simone V."/>
            <person name="Obermaier B."/>
            <person name="Mache R."/>
            <person name="Mueller M."/>
            <person name="Kreis M."/>
            <person name="Delseny M."/>
            <person name="Puigdomenech P."/>
            <person name="Watson M."/>
            <person name="Schmidtheini T."/>
            <person name="Reichert B."/>
            <person name="Portetelle D."/>
            <person name="Perez-Alonso M."/>
            <person name="Boutry M."/>
            <person name="Bancroft I."/>
            <person name="Vos P."/>
            <person name="Hoheisel J."/>
            <person name="Zimmermann W."/>
            <person name="Wedler H."/>
            <person name="Ridley P."/>
            <person name="Langham S.-A."/>
            <person name="McCullagh B."/>
            <person name="Bilham L."/>
            <person name="Robben J."/>
            <person name="van der Schueren J."/>
            <person name="Grymonprez B."/>
            <person name="Chuang Y.-J."/>
            <person name="Vandenbussche F."/>
            <person name="Braeken M."/>
            <person name="Weltjens I."/>
            <person name="Voet M."/>
            <person name="Bastiaens I."/>
            <person name="Aert R."/>
            <person name="Defoor E."/>
            <person name="Weitzenegger T."/>
            <person name="Bothe G."/>
            <person name="Ramsperger U."/>
            <person name="Hilbert H."/>
            <person name="Braun M."/>
            <person name="Holzer E."/>
            <person name="Brandt A."/>
            <person name="Peters S."/>
            <person name="van Staveren M."/>
            <person name="Dirkse W."/>
            <person name="Mooijman P."/>
            <person name="Klein Lankhorst R."/>
            <person name="Rose M."/>
            <person name="Hauf J."/>
            <person name="Koetter P."/>
            <person name="Berneiser S."/>
            <person name="Hempel S."/>
            <person name="Feldpausch M."/>
            <person name="Lamberth S."/>
            <person name="Van den Daele H."/>
            <person name="De Keyser A."/>
            <person name="Buysshaert C."/>
            <person name="Gielen J."/>
            <person name="Villarroel R."/>
            <person name="De Clercq R."/>
            <person name="van Montagu M."/>
            <person name="Rogers J."/>
            <person name="Cronin A."/>
            <person name="Quail M.A."/>
            <person name="Bray-Allen S."/>
            <person name="Clark L."/>
            <person name="Doggett J."/>
            <person name="Hall S."/>
            <person name="Kay M."/>
            <person name="Lennard N."/>
            <person name="McLay K."/>
            <person name="Mayes R."/>
            <person name="Pettett A."/>
            <person name="Rajandream M.A."/>
            <person name="Lyne M."/>
            <person name="Benes V."/>
            <person name="Rechmann S."/>
            <person name="Borkova D."/>
            <person name="Bloecker H."/>
            <person name="Scharfe M."/>
            <person name="Grimm M."/>
            <person name="Loehnert T.-H."/>
            <person name="Dose S."/>
            <person name="de Haan M."/>
            <person name="Maarse A.C."/>
            <person name="Schaefer M."/>
            <person name="Mueller-Auer S."/>
            <person name="Gabel C."/>
            <person name="Fuchs M."/>
            <person name="Fartmann B."/>
            <person name="Granderath K."/>
            <person name="Dauner D."/>
            <person name="Herzl A."/>
            <person name="Neumann S."/>
            <person name="Argiriou A."/>
            <person name="Vitale D."/>
            <person name="Liguori R."/>
            <person name="Piravandi E."/>
            <person name="Massenet O."/>
            <person name="Quigley F."/>
            <person name="Clabauld G."/>
            <person name="Muendlein A."/>
            <person name="Felber R."/>
            <person name="Schnabl S."/>
            <person name="Hiller R."/>
            <person name="Schmidt W."/>
            <person name="Lecharny A."/>
            <person name="Aubourg S."/>
            <person name="Chefdor F."/>
            <person name="Cooke R."/>
            <person name="Berger C."/>
            <person name="Monfort A."/>
            <person name="Casacuberta E."/>
            <person name="Gibbons T."/>
            <person name="Weber N."/>
            <person name="Vandenbol M."/>
            <person name="Bargues M."/>
            <person name="Terol J."/>
            <person name="Torres A."/>
            <person name="Perez-Perez A."/>
            <person name="Purnelle B."/>
            <person name="Bent E."/>
            <person name="Johnson S."/>
            <person name="Tacon D."/>
            <person name="Jesse T."/>
            <person name="Heijnen L."/>
            <person name="Schwarz S."/>
            <person name="Scholler P."/>
            <person name="Heber S."/>
            <person name="Francs P."/>
            <person name="Bielke C."/>
            <person name="Frishman D."/>
            <person name="Haase D."/>
            <person name="Lemcke K."/>
            <person name="Mewes H.-W."/>
            <person name="Stocker S."/>
            <person name="Zaccaria P."/>
            <person name="Bevan M."/>
            <person name="Wilson R.K."/>
            <person name="de la Bastide M."/>
            <person name="Habermann K."/>
            <person name="Parnell L."/>
            <person name="Dedhia N."/>
            <person name="Gnoj L."/>
            <person name="Schutz K."/>
            <person name="Huang E."/>
            <person name="Spiegel L."/>
            <person name="Sekhon M."/>
            <person name="Murray J."/>
            <person name="Sheet P."/>
            <person name="Cordes M."/>
            <person name="Abu-Threideh J."/>
            <person name="Stoneking T."/>
            <person name="Kalicki J."/>
            <person name="Graves T."/>
            <person name="Harmon G."/>
            <person name="Edwards J."/>
            <person name="Latreille P."/>
            <person name="Courtney L."/>
            <person name="Cloud J."/>
            <person name="Abbott A."/>
            <person name="Scott K."/>
            <person name="Johnson D."/>
            <person name="Minx P."/>
            <person name="Bentley D."/>
            <person name="Fulton B."/>
            <person name="Miller N."/>
            <person name="Greco T."/>
            <person name="Kemp K."/>
            <person name="Kramer J."/>
            <person name="Fulton L."/>
            <person name="Mardis E."/>
            <person name="Dante M."/>
            <person name="Pepin K."/>
            <person name="Hillier L.W."/>
            <person name="Nelson J."/>
            <person name="Spieth J."/>
            <person name="Ryan E."/>
            <person name="Andrews S."/>
            <person name="Geisel C."/>
            <person name="Layman D."/>
            <person name="Du H."/>
            <person name="Ali J."/>
            <person name="Berghoff A."/>
            <person name="Jones K."/>
            <person name="Drone K."/>
            <person name="Cotton M."/>
            <person name="Joshu C."/>
            <person name="Antonoiu B."/>
            <person name="Zidanic M."/>
            <person name="Strong C."/>
            <person name="Sun H."/>
            <person name="Lamar B."/>
            <person name="Yordan C."/>
            <person name="Ma P."/>
            <person name="Zhong J."/>
            <person name="Preston R."/>
            <person name="Vil D."/>
            <person name="Shekher M."/>
            <person name="Matero A."/>
            <person name="Shah R."/>
            <person name="Swaby I.K."/>
            <person name="O'Shaughnessy A."/>
            <person name="Rodriguez M."/>
            <person name="Hoffman J."/>
            <person name="Till S."/>
            <person name="Granat S."/>
            <person name="Shohdy N."/>
            <person name="Hasegawa A."/>
            <person name="Hameed A."/>
            <person name="Lodhi M."/>
            <person name="Johnson A."/>
            <person name="Chen E."/>
            <person name="Marra M.A."/>
            <person name="Martienssen R."/>
            <person name="McCombie W.R."/>
        </authorList>
    </citation>
    <scope>NUCLEOTIDE SEQUENCE [LARGE SCALE GENOMIC DNA]</scope>
    <source>
        <strain>cv. Columbia</strain>
    </source>
</reference>
<reference key="2">
    <citation type="journal article" date="2017" name="Plant J.">
        <title>Araport11: a complete reannotation of the Arabidopsis thaliana reference genome.</title>
        <authorList>
            <person name="Cheng C.Y."/>
            <person name="Krishnakumar V."/>
            <person name="Chan A.P."/>
            <person name="Thibaud-Nissen F."/>
            <person name="Schobel S."/>
            <person name="Town C.D."/>
        </authorList>
    </citation>
    <scope>GENOME REANNOTATION</scope>
    <source>
        <strain>cv. Columbia</strain>
    </source>
</reference>
<reference key="3">
    <citation type="journal article" date="2002" name="Science">
        <title>Functional annotation of a full-length Arabidopsis cDNA collection.</title>
        <authorList>
            <person name="Seki M."/>
            <person name="Narusaka M."/>
            <person name="Kamiya A."/>
            <person name="Ishida J."/>
            <person name="Satou M."/>
            <person name="Sakurai T."/>
            <person name="Nakajima M."/>
            <person name="Enju A."/>
            <person name="Akiyama K."/>
            <person name="Oono Y."/>
            <person name="Muramatsu M."/>
            <person name="Hayashizaki Y."/>
            <person name="Kawai J."/>
            <person name="Carninci P."/>
            <person name="Itoh M."/>
            <person name="Ishii Y."/>
            <person name="Arakawa T."/>
            <person name="Shibata K."/>
            <person name="Shinagawa A."/>
            <person name="Shinozaki K."/>
        </authorList>
    </citation>
    <scope>NUCLEOTIDE SEQUENCE [LARGE SCALE MRNA] (ISOFORM 2)</scope>
    <source>
        <strain>cv. Columbia</strain>
    </source>
</reference>
<reference key="4">
    <citation type="journal article" date="2003" name="Science">
        <title>Empirical analysis of transcriptional activity in the Arabidopsis genome.</title>
        <authorList>
            <person name="Yamada K."/>
            <person name="Lim J."/>
            <person name="Dale J.M."/>
            <person name="Chen H."/>
            <person name="Shinn P."/>
            <person name="Palm C.J."/>
            <person name="Southwick A.M."/>
            <person name="Wu H.C."/>
            <person name="Kim C.J."/>
            <person name="Nguyen M."/>
            <person name="Pham P.K."/>
            <person name="Cheuk R.F."/>
            <person name="Karlin-Newmann G."/>
            <person name="Liu S.X."/>
            <person name="Lam B."/>
            <person name="Sakano H."/>
            <person name="Wu T."/>
            <person name="Yu G."/>
            <person name="Miranda M."/>
            <person name="Quach H.L."/>
            <person name="Tripp M."/>
            <person name="Chang C.H."/>
            <person name="Lee J.M."/>
            <person name="Toriumi M.J."/>
            <person name="Chan M.M."/>
            <person name="Tang C.C."/>
            <person name="Onodera C.S."/>
            <person name="Deng J.M."/>
            <person name="Akiyama K."/>
            <person name="Ansari Y."/>
            <person name="Arakawa T."/>
            <person name="Banh J."/>
            <person name="Banno F."/>
            <person name="Bowser L."/>
            <person name="Brooks S.Y."/>
            <person name="Carninci P."/>
            <person name="Chao Q."/>
            <person name="Choy N."/>
            <person name="Enju A."/>
            <person name="Goldsmith A.D."/>
            <person name="Gurjal M."/>
            <person name="Hansen N.F."/>
            <person name="Hayashizaki Y."/>
            <person name="Johnson-Hopson C."/>
            <person name="Hsuan V.W."/>
            <person name="Iida K."/>
            <person name="Karnes M."/>
            <person name="Khan S."/>
            <person name="Koesema E."/>
            <person name="Ishida J."/>
            <person name="Jiang P.X."/>
            <person name="Jones T."/>
            <person name="Kawai J."/>
            <person name="Kamiya A."/>
            <person name="Meyers C."/>
            <person name="Nakajima M."/>
            <person name="Narusaka M."/>
            <person name="Seki M."/>
            <person name="Sakurai T."/>
            <person name="Satou M."/>
            <person name="Tamse R."/>
            <person name="Vaysberg M."/>
            <person name="Wallender E.K."/>
            <person name="Wong C."/>
            <person name="Yamamura Y."/>
            <person name="Yuan S."/>
            <person name="Shinozaki K."/>
            <person name="Davis R.W."/>
            <person name="Theologis A."/>
            <person name="Ecker J.R."/>
        </authorList>
    </citation>
    <scope>NUCLEOTIDE SEQUENCE [LARGE SCALE MRNA] (ISOFORM 2)</scope>
    <source>
        <strain>cv. Columbia</strain>
    </source>
</reference>
<reference key="5">
    <citation type="journal article" date="2004" name="Plant Physiol.">
        <title>Genome-wide ORFeome cloning and analysis of Arabidopsis transcription factor genes.</title>
        <authorList>
            <person name="Gong W."/>
            <person name="Shen Y.-P."/>
            <person name="Ma L.-G."/>
            <person name="Pan Y."/>
            <person name="Du Y.-L."/>
            <person name="Wang D.-H."/>
            <person name="Yang J.-Y."/>
            <person name="Hu L.-D."/>
            <person name="Liu X.-F."/>
            <person name="Dong C.-X."/>
            <person name="Ma L."/>
            <person name="Chen Y.-H."/>
            <person name="Yang X.-Y."/>
            <person name="Gao Y."/>
            <person name="Zhu D."/>
            <person name="Tan X."/>
            <person name="Mu J.-Y."/>
            <person name="Zhang D.-B."/>
            <person name="Liu Y.-L."/>
            <person name="Dinesh-Kumar S.P."/>
            <person name="Li Y."/>
            <person name="Wang X.-P."/>
            <person name="Gu H.-Y."/>
            <person name="Qu L.-J."/>
            <person name="Bai S.-N."/>
            <person name="Lu Y.-T."/>
            <person name="Li J.-Y."/>
            <person name="Zhao J.-D."/>
            <person name="Zuo J."/>
            <person name="Huang H."/>
            <person name="Deng X.-W."/>
            <person name="Zhu Y.-X."/>
        </authorList>
    </citation>
    <scope>NUCLEOTIDE SEQUENCE [LARGE SCALE MRNA] (ISOFORM 1)</scope>
    <source>
        <strain>cv. Columbia</strain>
    </source>
</reference>
<reference key="6">
    <citation type="submission" date="2006-07" db="EMBL/GenBank/DDBJ databases">
        <title>Large-scale analysis of RIKEN Arabidopsis full-length (RAFL) cDNAs.</title>
        <authorList>
            <person name="Totoki Y."/>
            <person name="Seki M."/>
            <person name="Ishida J."/>
            <person name="Nakajima M."/>
            <person name="Enju A."/>
            <person name="Kamiya A."/>
            <person name="Narusaka M."/>
            <person name="Shin-i T."/>
            <person name="Nakagawa M."/>
            <person name="Sakamoto N."/>
            <person name="Oishi K."/>
            <person name="Kohara Y."/>
            <person name="Kobayashi M."/>
            <person name="Toyoda A."/>
            <person name="Sakaki Y."/>
            <person name="Sakurai T."/>
            <person name="Iida K."/>
            <person name="Akiyama K."/>
            <person name="Satou M."/>
            <person name="Toyoda T."/>
            <person name="Konagaya A."/>
            <person name="Carninci P."/>
            <person name="Kawai J."/>
            <person name="Hayashizaki Y."/>
            <person name="Shinozaki K."/>
        </authorList>
    </citation>
    <scope>NUCLEOTIDE SEQUENCE [LARGE SCALE MRNA] (ISOFORMS 2 AND 3)</scope>
    <source>
        <strain>cv. Columbia</strain>
    </source>
</reference>
<reference key="7">
    <citation type="journal article" date="2003" name="Mol. Biol. Evol.">
        <title>The basic helix-loop-helix transcription factor family in plants: a genome-wide study of protein structure and functional diversity.</title>
        <authorList>
            <person name="Heim M.A."/>
            <person name="Jakoby M."/>
            <person name="Werber M."/>
            <person name="Martin C."/>
            <person name="Weisshaar B."/>
            <person name="Bailey P.C."/>
        </authorList>
    </citation>
    <scope>NUCLEOTIDE SEQUENCE [MRNA] OF 54-254 (ISOFORM 2)</scope>
    <scope>TISSUE SPECIFICITY</scope>
    <scope>GENE FAMILY</scope>
    <scope>NOMENCLATURE</scope>
    <source>
        <strain>cv. Columbia</strain>
    </source>
</reference>
<reference key="8">
    <citation type="journal article" date="2003" name="Plant Cell">
        <title>The Arabidopsis basic/helix-loop-helix transcription factor family.</title>
        <authorList>
            <person name="Toledo-Ortiz G."/>
            <person name="Huq E."/>
            <person name="Quail P.H."/>
        </authorList>
    </citation>
    <scope>GENE FAMILY</scope>
</reference>
<reference key="9">
    <citation type="journal article" date="2003" name="Plant Cell">
        <title>Update on the basic helix-loop-helix transcription factor gene family in Arabidopsis thaliana.</title>
        <authorList>
            <person name="Bailey P.C."/>
            <person name="Martin C."/>
            <person name="Toledo-Ortiz G."/>
            <person name="Quail P.H."/>
            <person name="Huq E."/>
            <person name="Heim M.A."/>
            <person name="Jakoby M."/>
            <person name="Werber M."/>
            <person name="Weisshaar B."/>
        </authorList>
    </citation>
    <scope>GENE FAMILY</scope>
    <scope>NOMENCLATURE</scope>
</reference>
<feature type="chain" id="PRO_0000358737" description="Transcription factor bHLH27">
    <location>
        <begin position="1"/>
        <end position="263"/>
    </location>
</feature>
<feature type="domain" description="bHLH" evidence="1">
    <location>
        <begin position="50"/>
        <end position="99"/>
    </location>
</feature>
<feature type="region of interest" description="Disordered" evidence="2">
    <location>
        <begin position="32"/>
        <end position="61"/>
    </location>
</feature>
<feature type="compositionally biased region" description="Low complexity" evidence="2">
    <location>
        <begin position="32"/>
        <end position="47"/>
    </location>
</feature>
<feature type="compositionally biased region" description="Polar residues" evidence="2">
    <location>
        <begin position="49"/>
        <end position="58"/>
    </location>
</feature>
<feature type="splice variant" id="VSP_036081" description="In isoform 3." evidence="7">
    <location>
        <begin position="124"/>
        <end position="152"/>
    </location>
</feature>
<feature type="splice variant" id="VSP_036082" description="In isoform 4." evidence="8">
    <original>MKVTWMGEKTVVVCITCSKKRETMVQLCKVLESLNLNILTTNFSSFTSRLSTTLFLQVTLSLSPSLISLFGNVITSTNYKILNASREYCTCLVLV</original>
    <variation>VRTMHYLAVHSKLPFF</variation>
    <location>
        <begin position="169"/>
        <end position="263"/>
    </location>
</feature>
<feature type="splice variant" id="VSP_036083" description="In isoform 2 and isoform 3." evidence="4 5 6 7">
    <original>VTLSLSPSLISLFGNVITSTNYKILNASREYCTCLVLV</original>
    <variation>ADEEESSAVEAKIQMAIAAYNDPNCLINF</variation>
    <location>
        <begin position="226"/>
        <end position="263"/>
    </location>
</feature>
<feature type="sequence conflict" description="In Ref. 7; AF488569." evidence="8" ref="7">
    <original>F</original>
    <variation>I</variation>
    <location>
        <position position="139"/>
    </location>
</feature>
<gene>
    <name type="primary">BHLH27</name>
    <name type="synonym">EN42</name>
    <name type="ordered locus">At4g29930</name>
    <name type="ORF">F27B13.170</name>
</gene>
<dbReference type="EMBL" id="AL161575">
    <property type="status" value="NOT_ANNOTATED_CDS"/>
    <property type="molecule type" value="Genomic_DNA"/>
</dbReference>
<dbReference type="EMBL" id="CP002687">
    <property type="protein sequence ID" value="AEE85694.1"/>
    <property type="molecule type" value="Genomic_DNA"/>
</dbReference>
<dbReference type="EMBL" id="CP002687">
    <property type="protein sequence ID" value="AEE85695.1"/>
    <property type="molecule type" value="Genomic_DNA"/>
</dbReference>
<dbReference type="EMBL" id="CP002687">
    <property type="protein sequence ID" value="AEE85696.1"/>
    <property type="molecule type" value="Genomic_DNA"/>
</dbReference>
<dbReference type="EMBL" id="CP002687">
    <property type="protein sequence ID" value="AEE85697.1"/>
    <property type="molecule type" value="Genomic_DNA"/>
</dbReference>
<dbReference type="EMBL" id="CP002687">
    <property type="protein sequence ID" value="ANM67230.1"/>
    <property type="molecule type" value="Genomic_DNA"/>
</dbReference>
<dbReference type="EMBL" id="AK117730">
    <property type="protein sequence ID" value="BAC42379.1"/>
    <property type="molecule type" value="mRNA"/>
</dbReference>
<dbReference type="EMBL" id="BT005869">
    <property type="protein sequence ID" value="AAO64804.1"/>
    <property type="molecule type" value="mRNA"/>
</dbReference>
<dbReference type="EMBL" id="AY568654">
    <property type="protein sequence ID" value="AAS79544.1"/>
    <property type="molecule type" value="mRNA"/>
</dbReference>
<dbReference type="EMBL" id="AJ630482">
    <property type="protein sequence ID" value="CAG25855.1"/>
    <property type="molecule type" value="mRNA"/>
</dbReference>
<dbReference type="EMBL" id="AK176201">
    <property type="protein sequence ID" value="BAD43964.1"/>
    <property type="molecule type" value="mRNA"/>
</dbReference>
<dbReference type="EMBL" id="AK176276">
    <property type="protein sequence ID" value="BAD44039.1"/>
    <property type="molecule type" value="mRNA"/>
</dbReference>
<dbReference type="EMBL" id="AK176674">
    <property type="protein sequence ID" value="BAD44437.1"/>
    <property type="molecule type" value="mRNA"/>
</dbReference>
<dbReference type="EMBL" id="AK222212">
    <property type="protein sequence ID" value="BAD95372.1"/>
    <property type="molecule type" value="mRNA"/>
</dbReference>
<dbReference type="EMBL" id="AK228201">
    <property type="protein sequence ID" value="BAF00155.1"/>
    <property type="molecule type" value="mRNA"/>
</dbReference>
<dbReference type="EMBL" id="AF488569">
    <property type="status" value="NOT_ANNOTATED_CDS"/>
    <property type="molecule type" value="mRNA"/>
</dbReference>
<dbReference type="RefSeq" id="NP_001031752.1">
    <molecule id="Q700E3-3"/>
    <property type="nucleotide sequence ID" value="NM_001036675.1"/>
</dbReference>
<dbReference type="RefSeq" id="NP_001078471.1">
    <molecule id="Q700E3-1"/>
    <property type="nucleotide sequence ID" value="NM_001085002.2"/>
</dbReference>
<dbReference type="RefSeq" id="NP_001119080.1">
    <molecule id="Q700E3-4"/>
    <property type="nucleotide sequence ID" value="NM_001125608.1"/>
</dbReference>
<dbReference type="RefSeq" id="NP_001329072.1">
    <molecule id="Q700E3-1"/>
    <property type="nucleotide sequence ID" value="NM_001341985.1"/>
</dbReference>
<dbReference type="RefSeq" id="NP_194722.2">
    <molecule id="Q700E3-2"/>
    <property type="nucleotide sequence ID" value="NM_119139.3"/>
</dbReference>
<dbReference type="SMR" id="Q700E3"/>
<dbReference type="BioGRID" id="14403">
    <property type="interactions" value="21"/>
</dbReference>
<dbReference type="FunCoup" id="Q700E3">
    <property type="interactions" value="48"/>
</dbReference>
<dbReference type="IntAct" id="Q700E3">
    <property type="interactions" value="20"/>
</dbReference>
<dbReference type="STRING" id="3702.Q700E3"/>
<dbReference type="PaxDb" id="3702-AT4G29930.3"/>
<dbReference type="EnsemblPlants" id="AT4G29930.1">
    <molecule id="Q700E3-2"/>
    <property type="protein sequence ID" value="AT4G29930.1"/>
    <property type="gene ID" value="AT4G29930"/>
</dbReference>
<dbReference type="EnsemblPlants" id="AT4G29930.2">
    <molecule id="Q700E3-3"/>
    <property type="protein sequence ID" value="AT4G29930.2"/>
    <property type="gene ID" value="AT4G29930"/>
</dbReference>
<dbReference type="EnsemblPlants" id="AT4G29930.3">
    <molecule id="Q700E3-1"/>
    <property type="protein sequence ID" value="AT4G29930.3"/>
    <property type="gene ID" value="AT4G29930"/>
</dbReference>
<dbReference type="EnsemblPlants" id="AT4G29930.4">
    <molecule id="Q700E3-4"/>
    <property type="protein sequence ID" value="AT4G29930.4"/>
    <property type="gene ID" value="AT4G29930"/>
</dbReference>
<dbReference type="EnsemblPlants" id="AT4G29930.7">
    <molecule id="Q700E3-1"/>
    <property type="protein sequence ID" value="AT4G29930.7"/>
    <property type="gene ID" value="AT4G29930"/>
</dbReference>
<dbReference type="GeneID" id="829116"/>
<dbReference type="Gramene" id="AT4G29930.1">
    <molecule id="Q700E3-2"/>
    <property type="protein sequence ID" value="AT4G29930.1"/>
    <property type="gene ID" value="AT4G29930"/>
</dbReference>
<dbReference type="Gramene" id="AT4G29930.2">
    <molecule id="Q700E3-3"/>
    <property type="protein sequence ID" value="AT4G29930.2"/>
    <property type="gene ID" value="AT4G29930"/>
</dbReference>
<dbReference type="Gramene" id="AT4G29930.3">
    <molecule id="Q700E3-1"/>
    <property type="protein sequence ID" value="AT4G29930.3"/>
    <property type="gene ID" value="AT4G29930"/>
</dbReference>
<dbReference type="Gramene" id="AT4G29930.4">
    <molecule id="Q700E3-4"/>
    <property type="protein sequence ID" value="AT4G29930.4"/>
    <property type="gene ID" value="AT4G29930"/>
</dbReference>
<dbReference type="Gramene" id="AT4G29930.7">
    <molecule id="Q700E3-1"/>
    <property type="protein sequence ID" value="AT4G29930.7"/>
    <property type="gene ID" value="AT4G29930"/>
</dbReference>
<dbReference type="KEGG" id="ath:AT4G29930"/>
<dbReference type="Araport" id="AT4G29930"/>
<dbReference type="TAIR" id="AT4G29930"/>
<dbReference type="eggNOG" id="ENOG502QWG4">
    <property type="taxonomic scope" value="Eukaryota"/>
</dbReference>
<dbReference type="InParanoid" id="Q700E3"/>
<dbReference type="OMA" id="HMGERTM"/>
<dbReference type="OrthoDB" id="623055at2759"/>
<dbReference type="PhylomeDB" id="Q700E3"/>
<dbReference type="PRO" id="PR:Q700E3"/>
<dbReference type="Proteomes" id="UP000006548">
    <property type="component" value="Chromosome 4"/>
</dbReference>
<dbReference type="ExpressionAtlas" id="Q700E3">
    <property type="expression patterns" value="baseline and differential"/>
</dbReference>
<dbReference type="GO" id="GO:0005634">
    <property type="term" value="C:nucleus"/>
    <property type="evidence" value="ECO:0007669"/>
    <property type="project" value="UniProtKB-SubCell"/>
</dbReference>
<dbReference type="GO" id="GO:0003677">
    <property type="term" value="F:DNA binding"/>
    <property type="evidence" value="ECO:0007669"/>
    <property type="project" value="UniProtKB-KW"/>
</dbReference>
<dbReference type="GO" id="GO:0003700">
    <property type="term" value="F:DNA-binding transcription factor activity"/>
    <property type="evidence" value="ECO:0000250"/>
    <property type="project" value="TAIR"/>
</dbReference>
<dbReference type="GO" id="GO:0046983">
    <property type="term" value="F:protein dimerization activity"/>
    <property type="evidence" value="ECO:0007669"/>
    <property type="project" value="InterPro"/>
</dbReference>
<dbReference type="GO" id="GO:0006355">
    <property type="term" value="P:regulation of DNA-templated transcription"/>
    <property type="evidence" value="ECO:0000304"/>
    <property type="project" value="TAIR"/>
</dbReference>
<dbReference type="CDD" id="cd11450">
    <property type="entry name" value="bHLH_AtFIT_like"/>
    <property type="match status" value="1"/>
</dbReference>
<dbReference type="FunFam" id="4.10.280.10:FF:000096">
    <property type="entry name" value="Basic helix-loop-helix (BHLH) DNA-binding superfamily protein"/>
    <property type="match status" value="1"/>
</dbReference>
<dbReference type="Gene3D" id="4.10.280.10">
    <property type="entry name" value="Helix-loop-helix DNA-binding domain"/>
    <property type="match status" value="1"/>
</dbReference>
<dbReference type="InterPro" id="IPR054502">
    <property type="entry name" value="bHLH-TF_ACT-like_plant"/>
</dbReference>
<dbReference type="InterPro" id="IPR011598">
    <property type="entry name" value="bHLH_dom"/>
</dbReference>
<dbReference type="InterPro" id="IPR036638">
    <property type="entry name" value="HLH_DNA-bd_sf"/>
</dbReference>
<dbReference type="InterPro" id="IPR051358">
    <property type="entry name" value="TF_AMS/ICE1/BHLH6-like"/>
</dbReference>
<dbReference type="PANTHER" id="PTHR31945:SF84">
    <property type="entry name" value="TRANSCRIPTION FACTOR BHLH27"/>
    <property type="match status" value="1"/>
</dbReference>
<dbReference type="PANTHER" id="PTHR31945">
    <property type="entry name" value="TRANSCRIPTION FACTOR SCREAM2-RELATED"/>
    <property type="match status" value="1"/>
</dbReference>
<dbReference type="Pfam" id="PF22754">
    <property type="entry name" value="bHLH-TF_ACT-like_plant"/>
    <property type="match status" value="1"/>
</dbReference>
<dbReference type="Pfam" id="PF00010">
    <property type="entry name" value="HLH"/>
    <property type="match status" value="1"/>
</dbReference>
<dbReference type="SMART" id="SM00353">
    <property type="entry name" value="HLH"/>
    <property type="match status" value="1"/>
</dbReference>
<dbReference type="SUPFAM" id="SSF47459">
    <property type="entry name" value="HLH, helix-loop-helix DNA-binding domain"/>
    <property type="match status" value="1"/>
</dbReference>
<dbReference type="PROSITE" id="PS50888">
    <property type="entry name" value="BHLH"/>
    <property type="match status" value="1"/>
</dbReference>
<sequence length="263" mass="30280">MEDLDHEYKNYWETTMFFQNQELEFDSWPMEEAFSGSGESSSPDGAATSPASSKNVVSERNRRQKLNQRLFALRSVVPNISKLDKASVIKDSIDYMQELIDQEKTLEAEIRELESRSTLLENPVRDYDCNFAETHLQDFSDNNDMRSKKFKQMDYSTRVQHYPIEVLEMKVTWMGEKTVVVCITCSKKRETMVQLCKVLESLNLNILTTNFSSFTSRLSTTLFLQVTLSLSPSLISLFGNVITSTNYKILNASREYCTCLVLV</sequence>
<comment type="subunit">
    <text evidence="8">Homodimer.</text>
</comment>
<comment type="subcellular location">
    <subcellularLocation>
        <location evidence="1">Nucleus</location>
    </subcellularLocation>
</comment>
<comment type="alternative products">
    <event type="alternative splicing"/>
    <isoform>
        <id>Q700E3-1</id>
        <name>1</name>
        <sequence type="displayed"/>
    </isoform>
    <isoform>
        <id>Q700E3-2</id>
        <name>2</name>
        <sequence type="described" ref="VSP_036083"/>
    </isoform>
    <isoform>
        <id>Q700E3-3</id>
        <name>3</name>
        <sequence type="described" ref="VSP_036081 VSP_036083"/>
    </isoform>
    <isoform>
        <id>Q700E3-4</id>
        <name>4</name>
        <sequence type="described" ref="VSP_036082"/>
    </isoform>
</comment>
<comment type="tissue specificity">
    <text evidence="3">Expressed constitutively in roots, leaves, stems, and flowers.</text>
</comment>
<proteinExistence type="evidence at transcript level"/>
<accession>Q700E3</accession>
<accession>B3H6F5</accession>
<accession>Q67XZ4</accession>
<accession>Q8GYC3</accession>
<protein>
    <recommendedName>
        <fullName>Transcription factor bHLH27</fullName>
    </recommendedName>
    <alternativeName>
        <fullName>Basic helix-loop-helix protein 27</fullName>
        <shortName>AtbHLH27</shortName>
        <shortName>bHLH 27</shortName>
    </alternativeName>
    <alternativeName>
        <fullName>Transcription factor EN 42</fullName>
    </alternativeName>
    <alternativeName>
        <fullName>bHLH transcription factor bHLH027</fullName>
    </alternativeName>
</protein>
<organism>
    <name type="scientific">Arabidopsis thaliana</name>
    <name type="common">Mouse-ear cress</name>
    <dbReference type="NCBI Taxonomy" id="3702"/>
    <lineage>
        <taxon>Eukaryota</taxon>
        <taxon>Viridiplantae</taxon>
        <taxon>Streptophyta</taxon>
        <taxon>Embryophyta</taxon>
        <taxon>Tracheophyta</taxon>
        <taxon>Spermatophyta</taxon>
        <taxon>Magnoliopsida</taxon>
        <taxon>eudicotyledons</taxon>
        <taxon>Gunneridae</taxon>
        <taxon>Pentapetalae</taxon>
        <taxon>rosids</taxon>
        <taxon>malvids</taxon>
        <taxon>Brassicales</taxon>
        <taxon>Brassicaceae</taxon>
        <taxon>Camelineae</taxon>
        <taxon>Arabidopsis</taxon>
    </lineage>
</organism>